<proteinExistence type="inferred from homology"/>
<evidence type="ECO:0000255" key="1">
    <source>
        <dbReference type="HAMAP-Rule" id="MF_00366"/>
    </source>
</evidence>
<accession>B5ZW67</accession>
<reference key="1">
    <citation type="journal article" date="2010" name="Stand. Genomic Sci.">
        <title>Complete genome sequence of Rhizobium leguminosarum bv trifolii strain WSM2304, an effective microsymbiont of the South American clover Trifolium polymorphum.</title>
        <authorList>
            <person name="Reeve W."/>
            <person name="O'Hara G."/>
            <person name="Chain P."/>
            <person name="Ardley J."/>
            <person name="Brau L."/>
            <person name="Nandesena K."/>
            <person name="Tiwari R."/>
            <person name="Malfatti S."/>
            <person name="Kiss H."/>
            <person name="Lapidus A."/>
            <person name="Copeland A."/>
            <person name="Nolan M."/>
            <person name="Land M."/>
            <person name="Ivanova N."/>
            <person name="Mavromatis K."/>
            <person name="Markowitz V."/>
            <person name="Kyrpides N."/>
            <person name="Melino V."/>
            <person name="Denton M."/>
            <person name="Yates R."/>
            <person name="Howieson J."/>
        </authorList>
    </citation>
    <scope>NUCLEOTIDE SEQUENCE [LARGE SCALE GENOMIC DNA]</scope>
    <source>
        <strain>WSM2304</strain>
    </source>
</reference>
<organism>
    <name type="scientific">Rhizobium leguminosarum bv. trifolii (strain WSM2304)</name>
    <dbReference type="NCBI Taxonomy" id="395492"/>
    <lineage>
        <taxon>Bacteria</taxon>
        <taxon>Pseudomonadati</taxon>
        <taxon>Pseudomonadota</taxon>
        <taxon>Alphaproteobacteria</taxon>
        <taxon>Hyphomicrobiales</taxon>
        <taxon>Rhizobiaceae</taxon>
        <taxon>Rhizobium/Agrobacterium group</taxon>
        <taxon>Rhizobium</taxon>
    </lineage>
</organism>
<feature type="chain" id="PRO_1000121261" description="DNA-directed RNA polymerase subunit omega">
    <location>
        <begin position="1"/>
        <end position="134"/>
    </location>
</feature>
<sequence>MARVTVEDCIDKVENRFELVLLASHRARLISQGASITIDRDNDKNPVVALREIADETLSPDDLKEDLIHSLQKHVEVDEPEPDPASMIAAGGVAAADSEEQDDLPETITFDQMSEEELLAGIEGLVPPEKSDDY</sequence>
<comment type="function">
    <text evidence="1">Promotes RNA polymerase assembly. Latches the N- and C-terminal regions of the beta' subunit thereby facilitating its interaction with the beta and alpha subunits.</text>
</comment>
<comment type="catalytic activity">
    <reaction evidence="1">
        <text>RNA(n) + a ribonucleoside 5'-triphosphate = RNA(n+1) + diphosphate</text>
        <dbReference type="Rhea" id="RHEA:21248"/>
        <dbReference type="Rhea" id="RHEA-COMP:14527"/>
        <dbReference type="Rhea" id="RHEA-COMP:17342"/>
        <dbReference type="ChEBI" id="CHEBI:33019"/>
        <dbReference type="ChEBI" id="CHEBI:61557"/>
        <dbReference type="ChEBI" id="CHEBI:140395"/>
        <dbReference type="EC" id="2.7.7.6"/>
    </reaction>
</comment>
<comment type="subunit">
    <text evidence="1">The RNAP catalytic core consists of 2 alpha, 1 beta, 1 beta' and 1 omega subunit. When a sigma factor is associated with the core the holoenzyme is formed, which can initiate transcription.</text>
</comment>
<comment type="similarity">
    <text evidence="1">Belongs to the RNA polymerase subunit omega family.</text>
</comment>
<gene>
    <name evidence="1" type="primary">rpoZ</name>
    <name type="ordered locus">Rleg2_0992</name>
</gene>
<protein>
    <recommendedName>
        <fullName evidence="1">DNA-directed RNA polymerase subunit omega</fullName>
        <shortName evidence="1">RNAP omega subunit</shortName>
        <ecNumber evidence="1">2.7.7.6</ecNumber>
    </recommendedName>
    <alternativeName>
        <fullName evidence="1">RNA polymerase omega subunit</fullName>
    </alternativeName>
    <alternativeName>
        <fullName evidence="1">Transcriptase subunit omega</fullName>
    </alternativeName>
</protein>
<name>RPOZ_RHILW</name>
<dbReference type="EC" id="2.7.7.6" evidence="1"/>
<dbReference type="EMBL" id="CP001191">
    <property type="protein sequence ID" value="ACI54286.1"/>
    <property type="molecule type" value="Genomic_DNA"/>
</dbReference>
<dbReference type="RefSeq" id="WP_003574261.1">
    <property type="nucleotide sequence ID" value="NC_011369.1"/>
</dbReference>
<dbReference type="SMR" id="B5ZW67"/>
<dbReference type="STRING" id="395492.Rleg2_0992"/>
<dbReference type="GeneID" id="75219277"/>
<dbReference type="KEGG" id="rlt:Rleg2_0992"/>
<dbReference type="eggNOG" id="COG1758">
    <property type="taxonomic scope" value="Bacteria"/>
</dbReference>
<dbReference type="HOGENOM" id="CLU_125406_2_0_5"/>
<dbReference type="Proteomes" id="UP000008330">
    <property type="component" value="Chromosome"/>
</dbReference>
<dbReference type="GO" id="GO:0000428">
    <property type="term" value="C:DNA-directed RNA polymerase complex"/>
    <property type="evidence" value="ECO:0007669"/>
    <property type="project" value="UniProtKB-KW"/>
</dbReference>
<dbReference type="GO" id="GO:0003677">
    <property type="term" value="F:DNA binding"/>
    <property type="evidence" value="ECO:0007669"/>
    <property type="project" value="UniProtKB-UniRule"/>
</dbReference>
<dbReference type="GO" id="GO:0003899">
    <property type="term" value="F:DNA-directed RNA polymerase activity"/>
    <property type="evidence" value="ECO:0007669"/>
    <property type="project" value="UniProtKB-UniRule"/>
</dbReference>
<dbReference type="GO" id="GO:0006351">
    <property type="term" value="P:DNA-templated transcription"/>
    <property type="evidence" value="ECO:0007669"/>
    <property type="project" value="UniProtKB-UniRule"/>
</dbReference>
<dbReference type="Gene3D" id="3.90.940.10">
    <property type="match status" value="1"/>
</dbReference>
<dbReference type="HAMAP" id="MF_00366">
    <property type="entry name" value="RNApol_bact_RpoZ"/>
    <property type="match status" value="1"/>
</dbReference>
<dbReference type="InterPro" id="IPR003716">
    <property type="entry name" value="DNA-dir_RNA_pol_omega"/>
</dbReference>
<dbReference type="InterPro" id="IPR006110">
    <property type="entry name" value="Pol_omega/Rpo6/RPB6"/>
</dbReference>
<dbReference type="InterPro" id="IPR036161">
    <property type="entry name" value="RPB6/omega-like_sf"/>
</dbReference>
<dbReference type="NCBIfam" id="TIGR00690">
    <property type="entry name" value="rpoZ"/>
    <property type="match status" value="1"/>
</dbReference>
<dbReference type="PANTHER" id="PTHR34476">
    <property type="entry name" value="DNA-DIRECTED RNA POLYMERASE SUBUNIT OMEGA"/>
    <property type="match status" value="1"/>
</dbReference>
<dbReference type="PANTHER" id="PTHR34476:SF1">
    <property type="entry name" value="DNA-DIRECTED RNA POLYMERASE SUBUNIT OMEGA"/>
    <property type="match status" value="1"/>
</dbReference>
<dbReference type="Pfam" id="PF01192">
    <property type="entry name" value="RNA_pol_Rpb6"/>
    <property type="match status" value="1"/>
</dbReference>
<dbReference type="SMART" id="SM01409">
    <property type="entry name" value="RNA_pol_Rpb6"/>
    <property type="match status" value="1"/>
</dbReference>
<dbReference type="SUPFAM" id="SSF63562">
    <property type="entry name" value="RPB6/omega subunit-like"/>
    <property type="match status" value="1"/>
</dbReference>
<keyword id="KW-0240">DNA-directed RNA polymerase</keyword>
<keyword id="KW-0548">Nucleotidyltransferase</keyword>
<keyword id="KW-1185">Reference proteome</keyword>
<keyword id="KW-0804">Transcription</keyword>
<keyword id="KW-0808">Transferase</keyword>